<name>SMRD3_MOUSE</name>
<protein>
    <recommendedName>
        <fullName>SWI/SNF-related matrix-associated actin-dependent regulator of chromatin subfamily D member 3</fullName>
    </recommendedName>
    <alternativeName>
        <fullName>60 kDa BRG-1/Brm-associated factor subunit C</fullName>
    </alternativeName>
    <alternativeName>
        <fullName>BRG1-associated factor 60C</fullName>
        <shortName>BAF60C</shortName>
        <shortName>mBAF60c</shortName>
    </alternativeName>
</protein>
<evidence type="ECO:0000250" key="1">
    <source>
        <dbReference type="UniProtKB" id="Q6STE5"/>
    </source>
</evidence>
<evidence type="ECO:0000255" key="2">
    <source>
        <dbReference type="PROSITE-ProRule" id="PRU01273"/>
    </source>
</evidence>
<evidence type="ECO:0000256" key="3">
    <source>
        <dbReference type="SAM" id="MobiDB-lite"/>
    </source>
</evidence>
<evidence type="ECO:0000269" key="4">
    <source>
    </source>
</evidence>
<evidence type="ECO:0000269" key="5">
    <source>
    </source>
</evidence>
<evidence type="ECO:0000269" key="6">
    <source>
    </source>
</evidence>
<evidence type="ECO:0000303" key="7">
    <source>
    </source>
</evidence>
<evidence type="ECO:0000303" key="8">
    <source>
    </source>
</evidence>
<evidence type="ECO:0000305" key="9"/>
<reference key="1">
    <citation type="journal article" date="2005" name="Science">
        <title>The transcriptional landscape of the mammalian genome.</title>
        <authorList>
            <person name="Carninci P."/>
            <person name="Kasukawa T."/>
            <person name="Katayama S."/>
            <person name="Gough J."/>
            <person name="Frith M.C."/>
            <person name="Maeda N."/>
            <person name="Oyama R."/>
            <person name="Ravasi T."/>
            <person name="Lenhard B."/>
            <person name="Wells C."/>
            <person name="Kodzius R."/>
            <person name="Shimokawa K."/>
            <person name="Bajic V.B."/>
            <person name="Brenner S.E."/>
            <person name="Batalov S."/>
            <person name="Forrest A.R."/>
            <person name="Zavolan M."/>
            <person name="Davis M.J."/>
            <person name="Wilming L.G."/>
            <person name="Aidinis V."/>
            <person name="Allen J.E."/>
            <person name="Ambesi-Impiombato A."/>
            <person name="Apweiler R."/>
            <person name="Aturaliya R.N."/>
            <person name="Bailey T.L."/>
            <person name="Bansal M."/>
            <person name="Baxter L."/>
            <person name="Beisel K.W."/>
            <person name="Bersano T."/>
            <person name="Bono H."/>
            <person name="Chalk A.M."/>
            <person name="Chiu K.P."/>
            <person name="Choudhary V."/>
            <person name="Christoffels A."/>
            <person name="Clutterbuck D.R."/>
            <person name="Crowe M.L."/>
            <person name="Dalla E."/>
            <person name="Dalrymple B.P."/>
            <person name="de Bono B."/>
            <person name="Della Gatta G."/>
            <person name="di Bernardo D."/>
            <person name="Down T."/>
            <person name="Engstrom P."/>
            <person name="Fagiolini M."/>
            <person name="Faulkner G."/>
            <person name="Fletcher C.F."/>
            <person name="Fukushima T."/>
            <person name="Furuno M."/>
            <person name="Futaki S."/>
            <person name="Gariboldi M."/>
            <person name="Georgii-Hemming P."/>
            <person name="Gingeras T.R."/>
            <person name="Gojobori T."/>
            <person name="Green R.E."/>
            <person name="Gustincich S."/>
            <person name="Harbers M."/>
            <person name="Hayashi Y."/>
            <person name="Hensch T.K."/>
            <person name="Hirokawa N."/>
            <person name="Hill D."/>
            <person name="Huminiecki L."/>
            <person name="Iacono M."/>
            <person name="Ikeo K."/>
            <person name="Iwama A."/>
            <person name="Ishikawa T."/>
            <person name="Jakt M."/>
            <person name="Kanapin A."/>
            <person name="Katoh M."/>
            <person name="Kawasawa Y."/>
            <person name="Kelso J."/>
            <person name="Kitamura H."/>
            <person name="Kitano H."/>
            <person name="Kollias G."/>
            <person name="Krishnan S.P."/>
            <person name="Kruger A."/>
            <person name="Kummerfeld S.K."/>
            <person name="Kurochkin I.V."/>
            <person name="Lareau L.F."/>
            <person name="Lazarevic D."/>
            <person name="Lipovich L."/>
            <person name="Liu J."/>
            <person name="Liuni S."/>
            <person name="McWilliam S."/>
            <person name="Madan Babu M."/>
            <person name="Madera M."/>
            <person name="Marchionni L."/>
            <person name="Matsuda H."/>
            <person name="Matsuzawa S."/>
            <person name="Miki H."/>
            <person name="Mignone F."/>
            <person name="Miyake S."/>
            <person name="Morris K."/>
            <person name="Mottagui-Tabar S."/>
            <person name="Mulder N."/>
            <person name="Nakano N."/>
            <person name="Nakauchi H."/>
            <person name="Ng P."/>
            <person name="Nilsson R."/>
            <person name="Nishiguchi S."/>
            <person name="Nishikawa S."/>
            <person name="Nori F."/>
            <person name="Ohara O."/>
            <person name="Okazaki Y."/>
            <person name="Orlando V."/>
            <person name="Pang K.C."/>
            <person name="Pavan W.J."/>
            <person name="Pavesi G."/>
            <person name="Pesole G."/>
            <person name="Petrovsky N."/>
            <person name="Piazza S."/>
            <person name="Reed J."/>
            <person name="Reid J.F."/>
            <person name="Ring B.Z."/>
            <person name="Ringwald M."/>
            <person name="Rost B."/>
            <person name="Ruan Y."/>
            <person name="Salzberg S.L."/>
            <person name="Sandelin A."/>
            <person name="Schneider C."/>
            <person name="Schoenbach C."/>
            <person name="Sekiguchi K."/>
            <person name="Semple C.A."/>
            <person name="Seno S."/>
            <person name="Sessa L."/>
            <person name="Sheng Y."/>
            <person name="Shibata Y."/>
            <person name="Shimada H."/>
            <person name="Shimada K."/>
            <person name="Silva D."/>
            <person name="Sinclair B."/>
            <person name="Sperling S."/>
            <person name="Stupka E."/>
            <person name="Sugiura K."/>
            <person name="Sultana R."/>
            <person name="Takenaka Y."/>
            <person name="Taki K."/>
            <person name="Tammoja K."/>
            <person name="Tan S.L."/>
            <person name="Tang S."/>
            <person name="Taylor M.S."/>
            <person name="Tegner J."/>
            <person name="Teichmann S.A."/>
            <person name="Ueda H.R."/>
            <person name="van Nimwegen E."/>
            <person name="Verardo R."/>
            <person name="Wei C.L."/>
            <person name="Yagi K."/>
            <person name="Yamanishi H."/>
            <person name="Zabarovsky E."/>
            <person name="Zhu S."/>
            <person name="Zimmer A."/>
            <person name="Hide W."/>
            <person name="Bult C."/>
            <person name="Grimmond S.M."/>
            <person name="Teasdale R.D."/>
            <person name="Liu E.T."/>
            <person name="Brusic V."/>
            <person name="Quackenbush J."/>
            <person name="Wahlestedt C."/>
            <person name="Mattick J.S."/>
            <person name="Hume D.A."/>
            <person name="Kai C."/>
            <person name="Sasaki D."/>
            <person name="Tomaru Y."/>
            <person name="Fukuda S."/>
            <person name="Kanamori-Katayama M."/>
            <person name="Suzuki M."/>
            <person name="Aoki J."/>
            <person name="Arakawa T."/>
            <person name="Iida J."/>
            <person name="Imamura K."/>
            <person name="Itoh M."/>
            <person name="Kato T."/>
            <person name="Kawaji H."/>
            <person name="Kawagashira N."/>
            <person name="Kawashima T."/>
            <person name="Kojima M."/>
            <person name="Kondo S."/>
            <person name="Konno H."/>
            <person name="Nakano K."/>
            <person name="Ninomiya N."/>
            <person name="Nishio T."/>
            <person name="Okada M."/>
            <person name="Plessy C."/>
            <person name="Shibata K."/>
            <person name="Shiraki T."/>
            <person name="Suzuki S."/>
            <person name="Tagami M."/>
            <person name="Waki K."/>
            <person name="Watahiki A."/>
            <person name="Okamura-Oho Y."/>
            <person name="Suzuki H."/>
            <person name="Kawai J."/>
            <person name="Hayashizaki Y."/>
        </authorList>
    </citation>
    <scope>NUCLEOTIDE SEQUENCE [LARGE SCALE MRNA]</scope>
    <source>
        <strain>C57BL/6J</strain>
        <tissue>Cerebellum</tissue>
        <tissue>Embryonic head</tissue>
    </source>
</reference>
<reference key="2">
    <citation type="journal article" date="2004" name="Genome Res.">
        <title>The status, quality, and expansion of the NIH full-length cDNA project: the Mammalian Gene Collection (MGC).</title>
        <authorList>
            <consortium name="The MGC Project Team"/>
        </authorList>
    </citation>
    <scope>NUCLEOTIDE SEQUENCE [LARGE SCALE MRNA]</scope>
    <source>
        <strain>C57BL/6J</strain>
        <strain>FVB/N</strain>
        <tissue>Brain</tissue>
        <tissue>Mammary gland</tissue>
    </source>
</reference>
<reference key="3">
    <citation type="journal article" date="2004" name="J. Biol. Chem.">
        <title>Transcription factors and nuclear receptors interact with the SWI/SNF complex through the BAF60c subunit.</title>
        <authorList>
            <person name="Debril M.-B."/>
            <person name="Gelman L."/>
            <person name="Fayard E."/>
            <person name="Annicotte J.-S."/>
            <person name="Rocchi S."/>
            <person name="Auwerx J."/>
        </authorList>
    </citation>
    <scope>TISSUE SPECIFICITY</scope>
</reference>
<reference key="4">
    <citation type="journal article" date="2007" name="Neuron">
        <title>An essential switch in subunit composition of a chromatin remodeling complex during neural development.</title>
        <authorList>
            <person name="Lessard J."/>
            <person name="Wu J.I."/>
            <person name="Ranish J.A."/>
            <person name="Wan M."/>
            <person name="Winslow M.M."/>
            <person name="Staahl B.T."/>
            <person name="Wu H."/>
            <person name="Aebersold R."/>
            <person name="Graef I.A."/>
            <person name="Crabtree G.R."/>
        </authorList>
    </citation>
    <scope>FUNCTION OF THE NBAF AND NPBAF COMPLEXES</scope>
    <scope>IDENTIFICATION BY MASS SPECTROMETRY</scope>
    <scope>IDENTIFICATION IN THE NBAF AND NPBAF COMPLEXES</scope>
</reference>
<reference key="5">
    <citation type="journal article" date="2010" name="Cell">
        <title>A tissue-specific atlas of mouse protein phosphorylation and expression.</title>
        <authorList>
            <person name="Huttlin E.L."/>
            <person name="Jedrychowski M.P."/>
            <person name="Elias J.E."/>
            <person name="Goswami T."/>
            <person name="Rad R."/>
            <person name="Beausoleil S.A."/>
            <person name="Villen J."/>
            <person name="Haas W."/>
            <person name="Sowa M.E."/>
            <person name="Gygi S.P."/>
        </authorList>
    </citation>
    <scope>IDENTIFICATION BY MASS SPECTROMETRY [LARGE SCALE ANALYSIS]</scope>
    <source>
        <tissue>Brain</tissue>
        <tissue>Kidney</tissue>
    </source>
</reference>
<reference key="6">
    <citation type="journal article" date="2012" name="J. Biol. Chem.">
        <title>SWI/SNF chromatin-remodeling factors: multiscale analyses and diverse functions.</title>
        <authorList>
            <person name="Euskirchen G."/>
            <person name="Auerbach R.K."/>
            <person name="Snyder M."/>
        </authorList>
    </citation>
    <scope>REVIEW ON SWI/SNF CHROMATIN REMODELING COMPLEXES</scope>
</reference>
<reference key="7">
    <citation type="journal article" date="2015" name="Sci. Adv.">
        <title>Mammalian SWI/SNF chromatin remodeling complexes and cancer: Mechanistic insights gained from human genomics.</title>
        <authorList>
            <person name="Kadoch C."/>
            <person name="Crabtree G.R."/>
        </authorList>
    </citation>
    <scope>REVIEW ON SWI/SNF CHROMATIN REMODELING COMPLEXES</scope>
</reference>
<reference key="8">
    <citation type="journal article" date="2018" name="J. Biol. Chem.">
        <title>Glioma tumor suppressor candidate region gene 1 (GLTSCR1) and its paralog GLTSCR1-like form SWI/SNF chromatin remodeling subcomplexes.</title>
        <authorList>
            <person name="Alpsoy A."/>
            <person name="Dykhuizen E.C."/>
        </authorList>
    </citation>
    <scope>IDENTIFICATION IN THE GBAF COMPLEX</scope>
</reference>
<gene>
    <name type="primary">Smarcd3</name>
    <name type="synonym">Baf60c</name>
</gene>
<dbReference type="EMBL" id="AK005094">
    <property type="protein sequence ID" value="BAB23813.1"/>
    <property type="status" value="ALT_FRAME"/>
    <property type="molecule type" value="mRNA"/>
</dbReference>
<dbReference type="EMBL" id="AK019374">
    <property type="protein sequence ID" value="BAB31685.2"/>
    <property type="molecule type" value="mRNA"/>
</dbReference>
<dbReference type="EMBL" id="BC013122">
    <property type="protein sequence ID" value="AAH13122.2"/>
    <property type="molecule type" value="mRNA"/>
</dbReference>
<dbReference type="EMBL" id="BC060525">
    <property type="protein sequence ID" value="AAH60525.1"/>
    <property type="molecule type" value="mRNA"/>
</dbReference>
<dbReference type="CCDS" id="CCDS19126.1"/>
<dbReference type="RefSeq" id="NP_080167.3">
    <property type="nucleotide sequence ID" value="NM_025891.3"/>
</dbReference>
<dbReference type="SMR" id="Q6P9Z1"/>
<dbReference type="BioGRID" id="211860">
    <property type="interactions" value="12"/>
</dbReference>
<dbReference type="ComplexPortal" id="CPX-1232">
    <property type="entry name" value="SWI/SNF ATP-dependent chromatin remodeling complex, ACTL6A-ARID1A-SMARCA2 variant"/>
</dbReference>
<dbReference type="ComplexPortal" id="CPX-1233">
    <property type="entry name" value="SWI/SNF ATP-dependent chromatin remodeling complex, ACTL6A-ARID1A-SMARCA4 variant"/>
</dbReference>
<dbReference type="ComplexPortal" id="CPX-1234">
    <property type="entry name" value="SWI/SNF ATP-dependent chromatin remodeling complex, ACTL6A-ARID1B-SMARCA2 variant"/>
</dbReference>
<dbReference type="ComplexPortal" id="CPX-1235">
    <property type="entry name" value="SWI/SNF ATP-dependent chromatin remodeling complex, ACTL6A-ARID1B-SMARCA4 variant"/>
</dbReference>
<dbReference type="ComplexPortal" id="CPX-1236">
    <property type="entry name" value="SWI/SNF ATP-dependent chromatin remodeling complex, ACTL6B-ARID1A-SMARCA2 variant"/>
</dbReference>
<dbReference type="ComplexPortal" id="CPX-1237">
    <property type="entry name" value="SWI/SNF ATP-dependent chromatin remodeling complex, ACTL6B-ARID1A-SMARCA4 variant"/>
</dbReference>
<dbReference type="ComplexPortal" id="CPX-1238">
    <property type="entry name" value="SWI/SNF ATP-dependent chromatin remodeling complex, ACTL6B-ARID1B-SMARCA2 variant"/>
</dbReference>
<dbReference type="ComplexPortal" id="CPX-1239">
    <property type="entry name" value="SWI/SNF ATP-dependent chromatin remodeling complex, ACTL6B-ARID1B-SMARCA4 variant"/>
</dbReference>
<dbReference type="ComplexPortal" id="CPX-1240">
    <property type="entry name" value="Muscle cell-specific SWI/SNF ATP-dependent chromatin remodeling complex, ACTL6A-ARID1A-SMARCA2 variant"/>
</dbReference>
<dbReference type="ComplexPortal" id="CPX-1241">
    <property type="entry name" value="Muscle cell-specific SWI/SNF ATP-dependent chromatin remodeling complex, ACTL6A-ARID1A-SMARCA4 variant"/>
</dbReference>
<dbReference type="ComplexPortal" id="CPX-1242">
    <property type="entry name" value="Muscle cell-specific SWI/SNF ATP-dependent chromatin remodeling complex, ACTL6A-ARID1B-SMARCA2 variant"/>
</dbReference>
<dbReference type="ComplexPortal" id="CPX-1243">
    <property type="entry name" value="Muscle cell-specific SWI/SNF ATP-dependent chromatin remodeling complex, ACTL6A-ARID1B-SMARCA4 variant"/>
</dbReference>
<dbReference type="ComplexPortal" id="CPX-1244">
    <property type="entry name" value="Muscle cell-specific SWI/SNF ATP-dependent chromatin remodeling complex, ACTL6B-ARID1A-SMARCA2 variant"/>
</dbReference>
<dbReference type="ComplexPortal" id="CPX-1245">
    <property type="entry name" value="Muscle cell-specific SWI/SNF ATP-dependent chromatin remodeling complex, ACTL6B-ARID1A-SMARCA4 variant"/>
</dbReference>
<dbReference type="ComplexPortal" id="CPX-1246">
    <property type="entry name" value="Muscle cell-specific SWI/SNF ATP-dependent chromatin remodeling complex, ACTL6B-ARID1B-SMARCA2 variant"/>
</dbReference>
<dbReference type="ComplexPortal" id="CPX-1247">
    <property type="entry name" value="Muscle cell-specific SWI/SNF ATP-dependent chromatin remodeling complex, ACTL6B-ARID1B-SMARCA4 variant"/>
</dbReference>
<dbReference type="ComplexPortal" id="CPX-1252">
    <property type="entry name" value="Neural progenitor-specific SWI/SNF ATP-dependent chromatin remodeling complex, ARID1A-SMARCA2 variant"/>
</dbReference>
<dbReference type="ComplexPortal" id="CPX-1253">
    <property type="entry name" value="Neural progenitor-specific SWI/SNF ATP-dependent chromatin remodeling complex, ARID1A-SMARCA4 variant"/>
</dbReference>
<dbReference type="ComplexPortal" id="CPX-1254">
    <property type="entry name" value="Neural progenitor-specific SWI/SNF ATP-dependent chromatin remodeling complex, ARID1B-SMARCA2 variant"/>
</dbReference>
<dbReference type="ComplexPortal" id="CPX-1255">
    <property type="entry name" value="Neural progenitor-specific SWI/SNF ATP-dependent chromatin remodeling complex, ARID1B-SMARCA4 variant"/>
</dbReference>
<dbReference type="ComplexPortal" id="CPX-1256">
    <property type="entry name" value="Neuron-specific SWI/SNF ATP-dependent chromatin remodeling complex, ARID1A-SMARCA2 variant"/>
</dbReference>
<dbReference type="ComplexPortal" id="CPX-1257">
    <property type="entry name" value="Neuron-specific SWI/SNF ATP-dependent chromatin remodeling complex, ARID1A-SMARCA4 variant"/>
</dbReference>
<dbReference type="ComplexPortal" id="CPX-1258">
    <property type="entry name" value="Neuron-specific SWI/SNF ATP-dependent chromatin remodeling complex, ARID1B-SMARCA2 variant"/>
</dbReference>
<dbReference type="ComplexPortal" id="CPX-1259">
    <property type="entry name" value="Neuron-specific SWI/SNF ATP-dependent chromatin remodeling complex, ARID1B-SMARCA4 variant"/>
</dbReference>
<dbReference type="CORUM" id="Q6P9Z1"/>
<dbReference type="DIP" id="DIP-48886N"/>
<dbReference type="FunCoup" id="Q6P9Z1">
    <property type="interactions" value="2060"/>
</dbReference>
<dbReference type="IntAct" id="Q6P9Z1">
    <property type="interactions" value="6"/>
</dbReference>
<dbReference type="MINT" id="Q6P9Z1"/>
<dbReference type="STRING" id="10090.ENSMUSP00000030791"/>
<dbReference type="GlyGen" id="Q6P9Z1">
    <property type="glycosylation" value="1 site, 1 O-linked glycan (1 site)"/>
</dbReference>
<dbReference type="iPTMnet" id="Q6P9Z1"/>
<dbReference type="PhosphoSitePlus" id="Q6P9Z1"/>
<dbReference type="PaxDb" id="10090-ENSMUSP00000030791"/>
<dbReference type="PeptideAtlas" id="Q6P9Z1"/>
<dbReference type="ProteomicsDB" id="257525"/>
<dbReference type="Pumba" id="Q6P9Z1"/>
<dbReference type="Antibodypedia" id="18748">
    <property type="antibodies" value="258 antibodies from 28 providers"/>
</dbReference>
<dbReference type="DNASU" id="66993"/>
<dbReference type="Ensembl" id="ENSMUST00000030791.12">
    <property type="protein sequence ID" value="ENSMUSP00000030791.8"/>
    <property type="gene ID" value="ENSMUSG00000028949.14"/>
</dbReference>
<dbReference type="GeneID" id="66993"/>
<dbReference type="KEGG" id="mmu:66993"/>
<dbReference type="UCSC" id="uc008wsd.1">
    <property type="organism name" value="mouse"/>
</dbReference>
<dbReference type="AGR" id="MGI:1914243"/>
<dbReference type="CTD" id="6604"/>
<dbReference type="MGI" id="MGI:1914243">
    <property type="gene designation" value="Smarcd3"/>
</dbReference>
<dbReference type="VEuPathDB" id="HostDB:ENSMUSG00000028949"/>
<dbReference type="eggNOG" id="KOG2570">
    <property type="taxonomic scope" value="Eukaryota"/>
</dbReference>
<dbReference type="GeneTree" id="ENSGT00940000158945"/>
<dbReference type="InParanoid" id="Q6P9Z1"/>
<dbReference type="OMA" id="VMDSKHH"/>
<dbReference type="OrthoDB" id="10263741at2759"/>
<dbReference type="PhylomeDB" id="Q6P9Z1"/>
<dbReference type="TreeFam" id="TF106486"/>
<dbReference type="Reactome" id="R-MMU-3214858">
    <property type="pathway name" value="RMTs methylate histone arginines"/>
</dbReference>
<dbReference type="Reactome" id="R-MMU-400206">
    <property type="pathway name" value="Regulation of lipid metabolism by PPARalpha"/>
</dbReference>
<dbReference type="Reactome" id="R-MMU-8939243">
    <property type="pathway name" value="RUNX1 interacts with co-factors whose precise effect on RUNX1 targets is not known"/>
</dbReference>
<dbReference type="Reactome" id="R-MMU-9707564">
    <property type="pathway name" value="Cytoprotection by HMOX1"/>
</dbReference>
<dbReference type="BioGRID-ORCS" id="66993">
    <property type="hits" value="1 hit in 87 CRISPR screens"/>
</dbReference>
<dbReference type="ChiTaRS" id="Smarcd3">
    <property type="organism name" value="mouse"/>
</dbReference>
<dbReference type="PRO" id="PR:Q6P9Z1"/>
<dbReference type="Proteomes" id="UP000000589">
    <property type="component" value="Chromosome 5"/>
</dbReference>
<dbReference type="RNAct" id="Q6P9Z1">
    <property type="molecule type" value="protein"/>
</dbReference>
<dbReference type="Bgee" id="ENSMUSG00000028949">
    <property type="expression patterns" value="Expressed in cortical plate and 252 other cell types or tissues"/>
</dbReference>
<dbReference type="ExpressionAtlas" id="Q6P9Z1">
    <property type="expression patterns" value="baseline and differential"/>
</dbReference>
<dbReference type="GO" id="GO:0035060">
    <property type="term" value="C:brahma complex"/>
    <property type="evidence" value="ECO:0000303"/>
    <property type="project" value="ComplexPortal"/>
</dbReference>
<dbReference type="GO" id="GO:0000785">
    <property type="term" value="C:chromatin"/>
    <property type="evidence" value="ECO:0000303"/>
    <property type="project" value="ComplexPortal"/>
</dbReference>
<dbReference type="GO" id="GO:0071565">
    <property type="term" value="C:nBAF complex"/>
    <property type="evidence" value="ECO:0000314"/>
    <property type="project" value="UniProtKB"/>
</dbReference>
<dbReference type="GO" id="GO:0071564">
    <property type="term" value="C:npBAF complex"/>
    <property type="evidence" value="ECO:0000314"/>
    <property type="project" value="UniProtKB"/>
</dbReference>
<dbReference type="GO" id="GO:0005654">
    <property type="term" value="C:nucleoplasm"/>
    <property type="evidence" value="ECO:0000304"/>
    <property type="project" value="Reactome"/>
</dbReference>
<dbReference type="GO" id="GO:0005634">
    <property type="term" value="C:nucleus"/>
    <property type="evidence" value="ECO:0000314"/>
    <property type="project" value="BHF-UCL"/>
</dbReference>
<dbReference type="GO" id="GO:0016514">
    <property type="term" value="C:SWI/SNF complex"/>
    <property type="evidence" value="ECO:0000314"/>
    <property type="project" value="UniProtKB"/>
</dbReference>
<dbReference type="GO" id="GO:0003682">
    <property type="term" value="F:chromatin binding"/>
    <property type="evidence" value="ECO:0007669"/>
    <property type="project" value="Ensembl"/>
</dbReference>
<dbReference type="GO" id="GO:0016922">
    <property type="term" value="F:nuclear receptor binding"/>
    <property type="evidence" value="ECO:0007669"/>
    <property type="project" value="Ensembl"/>
</dbReference>
<dbReference type="GO" id="GO:0005102">
    <property type="term" value="F:signaling receptor binding"/>
    <property type="evidence" value="ECO:0007669"/>
    <property type="project" value="Ensembl"/>
</dbReference>
<dbReference type="GO" id="GO:0001221">
    <property type="term" value="F:transcription coregulator binding"/>
    <property type="evidence" value="ECO:0007669"/>
    <property type="project" value="Ensembl"/>
</dbReference>
<dbReference type="GO" id="GO:0003219">
    <property type="term" value="P:cardiac right ventricle formation"/>
    <property type="evidence" value="ECO:0000315"/>
    <property type="project" value="MGI"/>
</dbReference>
<dbReference type="GO" id="GO:0006338">
    <property type="term" value="P:chromatin remodeling"/>
    <property type="evidence" value="ECO:0000303"/>
    <property type="project" value="ComplexPortal"/>
</dbReference>
<dbReference type="GO" id="GO:0003007">
    <property type="term" value="P:heart morphogenesis"/>
    <property type="evidence" value="ECO:0000315"/>
    <property type="project" value="MGI"/>
</dbReference>
<dbReference type="GO" id="GO:0042692">
    <property type="term" value="P:muscle cell differentiation"/>
    <property type="evidence" value="ECO:0000315"/>
    <property type="project" value="MGI"/>
</dbReference>
<dbReference type="GO" id="GO:0007399">
    <property type="term" value="P:nervous system development"/>
    <property type="evidence" value="ECO:0007669"/>
    <property type="project" value="UniProtKB-KW"/>
</dbReference>
<dbReference type="GO" id="GO:0003407">
    <property type="term" value="P:neural retina development"/>
    <property type="evidence" value="ECO:0000270"/>
    <property type="project" value="BHF-UCL"/>
</dbReference>
<dbReference type="GO" id="GO:0006337">
    <property type="term" value="P:nucleosome disassembly"/>
    <property type="evidence" value="ECO:0007669"/>
    <property type="project" value="Ensembl"/>
</dbReference>
<dbReference type="GO" id="GO:0045597">
    <property type="term" value="P:positive regulation of cell differentiation"/>
    <property type="evidence" value="ECO:0000303"/>
    <property type="project" value="ComplexPortal"/>
</dbReference>
<dbReference type="GO" id="GO:0045893">
    <property type="term" value="P:positive regulation of DNA-templated transcription"/>
    <property type="evidence" value="ECO:0000314"/>
    <property type="project" value="MGI"/>
</dbReference>
<dbReference type="GO" id="GO:2000781">
    <property type="term" value="P:positive regulation of double-strand break repair"/>
    <property type="evidence" value="ECO:0000303"/>
    <property type="project" value="ComplexPortal"/>
</dbReference>
<dbReference type="GO" id="GO:0010971">
    <property type="term" value="P:positive regulation of G2/M transition of mitotic cell cycle"/>
    <property type="evidence" value="ECO:0007669"/>
    <property type="project" value="Ensembl"/>
</dbReference>
<dbReference type="GO" id="GO:0045663">
    <property type="term" value="P:positive regulation of myoblast differentiation"/>
    <property type="evidence" value="ECO:0000303"/>
    <property type="project" value="ComplexPortal"/>
</dbReference>
<dbReference type="GO" id="GO:0002052">
    <property type="term" value="P:positive regulation of neuroblast proliferation"/>
    <property type="evidence" value="ECO:0007669"/>
    <property type="project" value="Ensembl"/>
</dbReference>
<dbReference type="GO" id="GO:0051152">
    <property type="term" value="P:positive regulation of smooth muscle cell differentiation"/>
    <property type="evidence" value="ECO:0007669"/>
    <property type="project" value="Ensembl"/>
</dbReference>
<dbReference type="GO" id="GO:0045582">
    <property type="term" value="P:positive regulation of T cell differentiation"/>
    <property type="evidence" value="ECO:0000303"/>
    <property type="project" value="ComplexPortal"/>
</dbReference>
<dbReference type="GO" id="GO:0070316">
    <property type="term" value="P:regulation of G0 to G1 transition"/>
    <property type="evidence" value="ECO:0000303"/>
    <property type="project" value="ComplexPortal"/>
</dbReference>
<dbReference type="GO" id="GO:2000045">
    <property type="term" value="P:regulation of G1/S transition of mitotic cell cycle"/>
    <property type="evidence" value="ECO:0000303"/>
    <property type="project" value="ComplexPortal"/>
</dbReference>
<dbReference type="GO" id="GO:0030071">
    <property type="term" value="P:regulation of mitotic metaphase/anaphase transition"/>
    <property type="evidence" value="ECO:0000303"/>
    <property type="project" value="ComplexPortal"/>
</dbReference>
<dbReference type="GO" id="GO:2000819">
    <property type="term" value="P:regulation of nucleotide-excision repair"/>
    <property type="evidence" value="ECO:0000303"/>
    <property type="project" value="ComplexPortal"/>
</dbReference>
<dbReference type="GO" id="GO:0006357">
    <property type="term" value="P:regulation of transcription by RNA polymerase II"/>
    <property type="evidence" value="ECO:0000303"/>
    <property type="project" value="ComplexPortal"/>
</dbReference>
<dbReference type="GO" id="GO:0003139">
    <property type="term" value="P:secondary heart field specification"/>
    <property type="evidence" value="ECO:0000315"/>
    <property type="project" value="MGI"/>
</dbReference>
<dbReference type="CDD" id="cd17676">
    <property type="entry name" value="SWIB_BAF60C"/>
    <property type="match status" value="1"/>
</dbReference>
<dbReference type="FunFam" id="1.10.245.10:FF:000001">
    <property type="entry name" value="SWI/SNF-related matrix-associated regulator of chromatin subfamily D member 3 isoform 1"/>
    <property type="match status" value="1"/>
</dbReference>
<dbReference type="Gene3D" id="1.10.245.10">
    <property type="entry name" value="SWIB/MDM2 domain"/>
    <property type="match status" value="1"/>
</dbReference>
<dbReference type="InterPro" id="IPR038043">
    <property type="entry name" value="SMARCD3_SWIB_dom"/>
</dbReference>
<dbReference type="InterPro" id="IPR019835">
    <property type="entry name" value="SWIB_domain"/>
</dbReference>
<dbReference type="InterPro" id="IPR036885">
    <property type="entry name" value="SWIB_MDM2_dom_sf"/>
</dbReference>
<dbReference type="InterPro" id="IPR003121">
    <property type="entry name" value="SWIB_MDM2_domain"/>
</dbReference>
<dbReference type="PANTHER" id="PTHR13844">
    <property type="entry name" value="SWI/SNF-RELATED MATRIX-ASSOCIATED ACTIN-DEPENDENT REGULATOR OF CHROMATIN SUBFAMILY D"/>
    <property type="match status" value="1"/>
</dbReference>
<dbReference type="Pfam" id="PF02201">
    <property type="entry name" value="SWIB"/>
    <property type="match status" value="1"/>
</dbReference>
<dbReference type="SMART" id="SM00151">
    <property type="entry name" value="SWIB"/>
    <property type="match status" value="1"/>
</dbReference>
<dbReference type="SUPFAM" id="SSF47592">
    <property type="entry name" value="SWIB/MDM2 domain"/>
    <property type="match status" value="1"/>
</dbReference>
<dbReference type="PROSITE" id="PS51925">
    <property type="entry name" value="SWIB_MDM2"/>
    <property type="match status" value="1"/>
</dbReference>
<comment type="function">
    <text evidence="1 5 7 8">Involved in transcriptional activation and repression of select genes by chromatin remodeling (alteration of DNA-nucleosome topology). Component of SWI/SNF chromatin remodeling complexes that carry out key enzymatic activities, changing chromatin structure by altering DNA-histone contacts within a nucleosome in an ATP-dependent manner (PubMed:22952240, PubMed:26601204). Stimulates nuclear receptor mediated transcription. Belongs to the neural progenitors-specific chromatin remodeling complex (npBAF complex) and the neuron-specific chromatin remodeling complex (nBAF complex). During neural development a switch from a stem/progenitor to a postmitotic chromatin remodeling mechanism occurs as neurons exit the cell cycle and become committed to their adult state. The transition from proliferating neural stem/progenitor cells to postmitotic neurons requires a switch in subunit composition of the npBAF and nBAF complexes. As neural progenitors exit mitosis and differentiate into neurons, npBAF complexes which contain ACTL6A/BAF53A and PHF10/BAF45A, are exchanged for homologous alternative ACTL6B/BAF53B and DPF1/BAF45B or DPF3/BAF45C subunits in neuron-specific complexes (nBAF). The npBAF complex is essential for the self-renewal/proliferative capacity of the multipotent neural stem cells. The nBAF complex along with CREST plays a role regulating the activity of genes essential for dendrite growth (PubMed:17640523).</text>
</comment>
<comment type="subunit">
    <text evidence="1 5 6 7 8">Component of the multiprotein chromatin-remodeling complexes SWI/SNF: SWI/SNF-A (BAF), SWI/SNF-B (PBAF) and related complexes. The canonical complex contains a catalytic subunit (either SMARCA4/BRG1/BAF190A or SMARCA2/BRM/BAF190B) and at least SMARCE1, ACTL6A/BAF53, SMARCC1/BAF155, SMARCC2/BAF170, and SMARCB1/SNF5/BAF47. Other subunits specific to each of the complexes may also be present permitting several possible combinations developmentally and tissue specific (Probable). Component of the BAF complex, which includes at least actin (ACTB), ARID1A/BAF250A, ARID1B/BAF250B, SMARCA2/BRM, SMARCA4/BRG1/BAF190A, ACTL6A/BAF53, ACTL6B/BAF53B, SMARCE1/BAF57, SMARCC1/BAF155, SMARCC2/BAF170, SMARCB1/SNF5/INI1, and one or more SMARCD1/BAF60A, SMARCD2/BAF60B, or SMARCD3/BAF60C. In muscle cells, the BAF complex also contains DPF3 (By similarity). Component of neural progenitors-specific chromatin remodeling complex (npBAF complex) composed of at least, ARID1A/BAF250A or ARID1B/BAF250B, SMARCD1/BAF60A, SMARCD3/BAF60C, SMARCA2/BRM/BAF190B, SMARCA4/BRG1/BAF190A, SMARCB1/BAF47, SMARCC1/BAF155, SMARCE1/BAF57, SMARCC2/BAF170, PHF10/BAF45A, ACTL6A/BAF53A and actin. Component of neuron-specific chromatin remodeling complex (nBAF complex) composed of at least, ARID1A/BAF250A or ARID1B/BAF250B, SMARCD1/BAF60A, SMARCD3/BAF60C, SMARCA2/BRM/BAF190B, SMARCA4/BRG1/BAF190A, SMARCB1/BAF47, SMARCC1/BAF155, SMARCE1/BAF57, SMARCC2/BAF170, DPF1/BAF45B, DPF3/BAF45C, ACTL6B/BAF53B and actin (By similarity). May be a component of the SWI/SNF-B (PBAF) chromatin remodeling complex, at least composed of SMARCA4/BRG1, SMARCB1/BAF47/SNF5, ACTL6A/BAF53A or ACTL6B/BAF53B, SMARCE1/BAF57, SMARCD1/BAF60A, SMARCD2/BAF60B, perhaps SMARCD3/BAF60C, SMARCC1/BAF155, SMARCC2/BAF170, PBRM1/BAF180, ARID2/BAF200 and actin (PubMed:22952240, PubMed:26601204). Component of SWI/SNF (GBAF) subcomplex, which includes at least BICRA or BICRAL (mutually exclusive), BRD9, SS18, SMARCA2/BRM, SMARCA4/BRG1/BAF190A, ACTL6A/BAF53, SMARCC1/BAF155, and SMARCD1/BAF60A (PubMed:29374058). Interacts with SMARCA4/BRG1/BAF190A. The precise distribution of the related SMARCD1, SMARCD2 and SMARCD3 proteins among these and other SWI/SNF nucleosome-remodeling complexes is not fully known. May allow recruitment of SWI/SNF containing complexes specifically to promoters where these factors are located. Also interacts with several nuclear receptors including PPARG/NR1C3, RXRA/NR1F1, ESR1, NR5A1, NR5A2/LRH1 and other transcriptional activators including the HLH protein SREBF1/SREBP1 and the homeobox protein PBX1 (By similarity). Interacts with PRDM1/BLIMP1 (By similarity).</text>
</comment>
<comment type="interaction">
    <interactant intactId="EBI-7525857">
        <id>Q6P9Z1</id>
    </interactant>
    <interactant intactId="EBI-4405734">
        <id>P10085</id>
        <label>Myod1</label>
    </interactant>
    <organismsDiffer>false</organismsDiffer>
    <experiments>6</experiments>
</comment>
<comment type="interaction">
    <interactant intactId="EBI-7525857">
        <id>Q6P9Z1</id>
    </interactant>
    <interactant intactId="EBI-1392707">
        <id>Q01705</id>
        <label>Notch1</label>
    </interactant>
    <organismsDiffer>false</organismsDiffer>
    <experiments>2</experiments>
</comment>
<comment type="interaction">
    <interactant intactId="EBI-7525857">
        <id>Q6P9Z1</id>
    </interactant>
    <interactant intactId="EBI-1392666">
        <id>P31266</id>
        <label>Rbpj</label>
    </interactant>
    <organismsDiffer>false</organismsDiffer>
    <experiments>3</experiments>
</comment>
<comment type="interaction">
    <interactant intactId="EBI-7525857">
        <id>Q6P9Z1</id>
    </interactant>
    <interactant intactId="EBI-1210244">
        <id>Q3TKT4</id>
        <label>Smarca4</label>
    </interactant>
    <organismsDiffer>false</organismsDiffer>
    <experiments>3</experiments>
</comment>
<comment type="subcellular location">
    <subcellularLocation>
        <location evidence="1">Nucleus</location>
    </subcellularLocation>
</comment>
<comment type="tissue specificity">
    <text evidence="4">Ubiquitously expressed.</text>
</comment>
<comment type="similarity">
    <text evidence="9">Belongs to the SMARCD family.</text>
</comment>
<comment type="sequence caution" evidence="9">
    <conflict type="frameshift">
        <sequence resource="EMBL-CDS" id="BAB23813"/>
    </conflict>
</comment>
<sequence>MAADEVAGGARKATKSKLFEFLVHGVRPGMPSGARMPHQGAPMGPPGSPYMGSPAVRPGLAPAGMEPARKRAAPPPGQSQAQGQGQPVPTAPARSRSAKRRKMADKILPQRIRELVPESQAYMDLLAFERKLDQTIMRKRVDIQEALKRPMKQKRKLRLYISNTFNPAKPDAEDSDGSIASWELRVEGKLLDDPSKQKRKFSSFFKSLVIELDKDLYGPDNHLVEWHRTPTTQETDGFQVKRPGDLSVRCTLLLMLDYQPPQFKLDPRLARLLGLHTQSRSAIVQALWQYVKTNRLQDSHDKEYINGDKYFQQIFDCPRLKFSEIPQRLTALLLPPDPIVINHVISVDPSDQKKTACYDIDVEVEEPLKGQMSSFLLSTANQQEISALDSKIHETIESINQLKIQRDFMLSFSRDPKGYVQDLLRSQSRDLKVMTDVAGNPEEERRAEFYHQPWSQEAVSRYFYCKIQQRRQELEQSLVVRNT</sequence>
<proteinExistence type="evidence at protein level"/>
<keyword id="KW-0007">Acetylation</keyword>
<keyword id="KW-0156">Chromatin regulator</keyword>
<keyword id="KW-0524">Neurogenesis</keyword>
<keyword id="KW-0539">Nucleus</keyword>
<keyword id="KW-0597">Phosphoprotein</keyword>
<keyword id="KW-1185">Reference proteome</keyword>
<keyword id="KW-0804">Transcription</keyword>
<keyword id="KW-0805">Transcription regulation</keyword>
<feature type="initiator methionine" description="Removed" evidence="1">
    <location>
        <position position="1"/>
    </location>
</feature>
<feature type="chain" id="PRO_0000071989" description="SWI/SNF-related matrix-associated actin-dependent regulator of chromatin subfamily D member 3">
    <location>
        <begin position="2"/>
        <end position="483"/>
    </location>
</feature>
<feature type="domain" description="SWIB/MDM2" evidence="2">
    <location>
        <begin position="258"/>
        <end position="335"/>
    </location>
</feature>
<feature type="region of interest" description="Disordered" evidence="3">
    <location>
        <begin position="27"/>
        <end position="102"/>
    </location>
</feature>
<feature type="compositionally biased region" description="Low complexity" evidence="3">
    <location>
        <begin position="78"/>
        <end position="88"/>
    </location>
</feature>
<feature type="modified residue" description="N-acetylalanine" evidence="1">
    <location>
        <position position="2"/>
    </location>
</feature>
<feature type="modified residue" description="Phosphoserine" evidence="1">
    <location>
        <position position="178"/>
    </location>
</feature>
<feature type="sequence conflict" description="In Ref. 2; AAH60525." evidence="9" ref="2">
    <original>M</original>
    <variation>I</variation>
    <location>
        <position position="151"/>
    </location>
</feature>
<feature type="sequence conflict" description="In Ref. 1; BAB23813." evidence="9" ref="1">
    <original>S</original>
    <variation>C</variation>
    <location>
        <position position="323"/>
    </location>
</feature>
<accession>Q6P9Z1</accession>
<accession>Q921D3</accession>
<accession>Q9CX89</accession>
<accession>Q9DB99</accession>
<organism>
    <name type="scientific">Mus musculus</name>
    <name type="common">Mouse</name>
    <dbReference type="NCBI Taxonomy" id="10090"/>
    <lineage>
        <taxon>Eukaryota</taxon>
        <taxon>Metazoa</taxon>
        <taxon>Chordata</taxon>
        <taxon>Craniata</taxon>
        <taxon>Vertebrata</taxon>
        <taxon>Euteleostomi</taxon>
        <taxon>Mammalia</taxon>
        <taxon>Eutheria</taxon>
        <taxon>Euarchontoglires</taxon>
        <taxon>Glires</taxon>
        <taxon>Rodentia</taxon>
        <taxon>Myomorpha</taxon>
        <taxon>Muroidea</taxon>
        <taxon>Muridae</taxon>
        <taxon>Murinae</taxon>
        <taxon>Mus</taxon>
        <taxon>Mus</taxon>
    </lineage>
</organism>